<name>LPQH_MYCTU</name>
<organism>
    <name type="scientific">Mycobacterium tuberculosis (strain ATCC 25618 / H37Rv)</name>
    <dbReference type="NCBI Taxonomy" id="83332"/>
    <lineage>
        <taxon>Bacteria</taxon>
        <taxon>Bacillati</taxon>
        <taxon>Actinomycetota</taxon>
        <taxon>Actinomycetes</taxon>
        <taxon>Mycobacteriales</taxon>
        <taxon>Mycobacteriaceae</taxon>
        <taxon>Mycobacterium</taxon>
        <taxon>Mycobacterium tuberculosis complex</taxon>
    </lineage>
</organism>
<keyword id="KW-0002">3D-structure</keyword>
<keyword id="KW-1003">Cell membrane</keyword>
<keyword id="KW-0134">Cell wall</keyword>
<keyword id="KW-1015">Disulfide bond</keyword>
<keyword id="KW-0325">Glycoprotein</keyword>
<keyword id="KW-1035">Host cytoplasm</keyword>
<keyword id="KW-0449">Lipoprotein</keyword>
<keyword id="KW-0472">Membrane</keyword>
<keyword id="KW-0564">Palmitate</keyword>
<keyword id="KW-1185">Reference proteome</keyword>
<keyword id="KW-0964">Secreted</keyword>
<keyword id="KW-0732">Signal</keyword>
<keyword id="KW-0813">Transport</keyword>
<keyword id="KW-0843">Virulence</keyword>
<comment type="function">
    <text evidence="1 26">Based on its structure might be involved in ligand transport (By similarity) (Ref.25).</text>
</comment>
<comment type="function">
    <text evidence="3 5 6 7 8 10 11 14 16 19 20">A host TLR2 agonist (PubMed:10426995, PubMed:11441098, PubMed:12874328). Plays a complicated role in bacterial interactions with the host immune system; some effects favor the host (induces interleukin 1-beta and IL-12 p40 (IL12B), both increase the host's immune response) while others favor the bacteria (increases growth in monocyte-derived macrophages and decreases host MHC class II (MHC-II) expression and antigen processing) (PubMed:16177361). Induces host (human and mouse) IL-12 p40 (IL12B, a pro-inflammatory cytokine) release by monocyte cell lines via TLR2 and CD14 (PubMed:10426995). Induces host (human) monocytes to produce TNF-alpha, IL-6 and IL-12 p40; LpqH is a more potent inducer than PstS1 (PubMed:16622205). Inhibits MHC-II expression and antigen processing in host (mouse) macrophages via TLR2 (independently of TLR4) probably via the lipid modification (PubMed:11441098). Stimulates host (human) dendritic cell maturation to become MHC-II-positive antigen presenting cells via TLR2, which depends on lipidation; nonlipidated protein does not stimulate maturation (PubMed:11160304). Inhibits host (human and mouse) IFN-gamma signaling in macrophages via TLR2; decreases IFN-gamma stimulated MHC-II antigen processing as well as decreasing IFN-gamma-mediated up-regulation of immunoglobulin gamma Fc receptor (FCGR1A), enabling the bacteria to evade the immune system (PubMed:12874328). In resting human CD4+ T-cells lipidated (but probably not nonlipidated protein) is a costimulatory ligand (with anti-CD3 and anti-CD28) for T-cell proliferation and IFN-gamma and IL-2 production (PubMed:21078852). Human CD4+ T-cells probably use TLR1/TLR2 heterodimers to respond to mycobacterial lipoproteins (PubMed:21078852). Acting via TLR2 enhances expression of host peroxisome proliferator-activated receptor gamma (PPARG), a regulator of inflammation and immunoregulation, and increases p38 MAPK phosphorylation, IL-6 and TNF-alpha expression (PubMed:25504154). Native or nonlipidated recombinant protein missing the first 4 residues have been shown to induce apoptosis in the human macrophage cell line THP-1 and human monocyte-derived macrophages in a TLR2, caspase-3 and caspase-8-dependent manner (PubMed:12594264). Protein overexpressed in M.smegmatis (lipidated and probably glycosylated) induces apoptosis in human macrophages via TLR2 in a caspase-3/caspase-8-mediated manner, but also in a caspase-independent manner where mitochondrial apoptosis-inducing factor (AIFM1) translocates to the nucleus (PubMed:23316255). Another study found mature, native (lipidated) protein did not induce apoptosis in THP-1 macrophage cell line (PubMed:12874328). Functions as an adhesin, binds to human and mouse macrophages (PubMed:25359607).</text>
</comment>
<comment type="subcellular location">
    <subcellularLocation>
        <location evidence="18 23">Cell membrane</location>
        <topology evidence="24">Lipid-anchor</topology>
    </subcellularLocation>
    <subcellularLocation>
        <location evidence="3 9">Secreted</location>
        <location evidence="3 9">Cell wall</location>
    </subcellularLocation>
    <subcellularLocation>
        <location evidence="18 19">Cell surface</location>
    </subcellularLocation>
    <subcellularLocation>
        <location evidence="9 24">Secreted</location>
    </subcellularLocation>
    <subcellularLocation>
        <location evidence="15">Extracellular vesicle</location>
        <location evidence="15">Bacterial extracellular vesicle</location>
    </subcellularLocation>
    <subcellularLocation>
        <location evidence="4">Host cytoplasm</location>
    </subcellularLocation>
    <text evidence="3 4 9 13 15 18">A soluble cell wall-associated protein (PubMed:10426995). Also found in culture filtrate in increasing quantities during growth (PubMed:16098710, PubMed:1906192). Following infection of mouse macrophage cell line J774A.1 with live (but not heat-killed) bacteria the protein is released in host cytoplasm at 1 hr but decreases dramatically by 3 hrs: release into the host requires protein lipidation and traffics from the immature phagosome through the host class I MHC antigen peptide presentation pathway (PubMed:11123323). Present in bacterial extracytoplasmic vesicles, both in mouse macrophages and in culture media (PubMed:21364279). Immunoelectron microscopy indicates this protein is close to the cell surface (PubMed:25041568).</text>
</comment>
<comment type="induction">
    <text evidence="10">Expressed in cell culture; expressed at a steady level for 4 days following infection of human mononuclear phagocytes.</text>
</comment>
<comment type="domain">
    <text evidence="26">Forms a U-shaped beta-half-barrel with a large hydrophobic cavity.</text>
</comment>
<comment type="domain">
    <text evidence="18">A fragment of the mature protein (residues 41-60) prevents uptake of M.tuberculosis by a human macrophage-like cell line; lesser effects are seen on bacterial uptake by a human lung epithelial cell line.</text>
</comment>
<comment type="PTM">
    <text evidence="9 17 21">Triacylated with a thioether-linked diacylglycerol with C16 and C19 on Cys-22 and an amide-linked C16 fatty acid (PubMed:24093492). Modified by Lgt on Cys-22 with an S-linked diacylglycerol with a mixture of C16, C18 and C19 fatty acids (palmitic, stearic and tuberculostearic acid), signal peptide is removed by LspA, modifed by Lnt with an amide-linked mixture of C16 and C19 fatty acids, expressed in M.bovis (PubMed:24093492). Upon expression in M.smegmatis the protein is glycosylated (possibly by mannose, detected by concanavalin A (conA) binding) within the first 20 residues of the mature protein; altering the probably glycosylated Thr residues alters processing of the mature protein in M.smegmatis and slightly differently in M.vaccae (PubMed:8670858). Glycosylation may protect this region of the protein from proteolysis, which would release the lipoprotein from the cell surface (PubMed:8670858). Mannosylated upon expression in M.smegmatis; treatment with alpha-D-mannosidase decreases its apparent molecular weight (PubMed:16098710). Native protein binds conA (PubMed:16098710).</text>
</comment>
<comment type="mass spectrometry" mass="17300.0" method="MALDI" evidence="17">
    <text>Expressed in M.bovis, lipidated.</text>
</comment>
<comment type="disruption phenotype">
    <text evidence="10 12">No visible phenotype in culture. Grows less well than wild-type in human monocyte-derived macrophages (MDM) over 7 days; increased human monocyte MHC class II expression, decreased interleukin 1-beta secretion from monocytes and MDM (PubMed:16177361). No growth in C57BL/6 mice over 40 days, even in mice lacking gamma interferon (PubMed:17804126).</text>
</comment>
<comment type="biotechnology">
    <text evidence="12">A disrupted strain immunizes mice against subsequent infection with wild-type H37Rv as well as the M.bovis vaccine strain BCG.</text>
</comment>
<comment type="similarity">
    <text evidence="23">Belongs to the mycobacterial 19 kDa antigen family.</text>
</comment>
<sequence length="159" mass="15147">MKRGLTVAVAGAAILVAGLSGCSSNKSTTGSGETTTAAGTTASPGAASGPKVVIDGKDQNVTGSVVCTTAAGNVNIAIGGAATGIAAVLTDGNPPEVKSVGLGNVNGVTLGYTSGTGQGNASATKDGSHYKITGTATGVDMANPMSPVNKSFEIEVTCS</sequence>
<evidence type="ECO:0000250" key="1">
    <source>
        <dbReference type="UniProtKB" id="P65307"/>
    </source>
</evidence>
<evidence type="ECO:0000256" key="2">
    <source>
        <dbReference type="SAM" id="MobiDB-lite"/>
    </source>
</evidence>
<evidence type="ECO:0000269" key="3">
    <source>
    </source>
</evidence>
<evidence type="ECO:0000269" key="4">
    <source>
    </source>
</evidence>
<evidence type="ECO:0000269" key="5">
    <source>
    </source>
</evidence>
<evidence type="ECO:0000269" key="6">
    <source>
    </source>
</evidence>
<evidence type="ECO:0000269" key="7">
    <source>
    </source>
</evidence>
<evidence type="ECO:0000269" key="8">
    <source>
    </source>
</evidence>
<evidence type="ECO:0000269" key="9">
    <source>
    </source>
</evidence>
<evidence type="ECO:0000269" key="10">
    <source>
    </source>
</evidence>
<evidence type="ECO:0000269" key="11">
    <source>
    </source>
</evidence>
<evidence type="ECO:0000269" key="12">
    <source>
    </source>
</evidence>
<evidence type="ECO:0000269" key="13">
    <source>
    </source>
</evidence>
<evidence type="ECO:0000269" key="14">
    <source>
    </source>
</evidence>
<evidence type="ECO:0000269" key="15">
    <source>
    </source>
</evidence>
<evidence type="ECO:0000269" key="16">
    <source>
    </source>
</evidence>
<evidence type="ECO:0000269" key="17">
    <source>
    </source>
</evidence>
<evidence type="ECO:0000269" key="18">
    <source>
    </source>
</evidence>
<evidence type="ECO:0000269" key="19">
    <source>
    </source>
</evidence>
<evidence type="ECO:0000269" key="20">
    <source>
    </source>
</evidence>
<evidence type="ECO:0000269" key="21">
    <source>
    </source>
</evidence>
<evidence type="ECO:0000303" key="22">
    <source>
    </source>
</evidence>
<evidence type="ECO:0000305" key="23"/>
<evidence type="ECO:0000305" key="24">
    <source>
    </source>
</evidence>
<evidence type="ECO:0000305" key="25">
    <source>
    </source>
</evidence>
<evidence type="ECO:0000305" key="26">
    <source ref="25"/>
</evidence>
<evidence type="ECO:0007744" key="27">
    <source>
        <dbReference type="PDB" id="4ZJM"/>
    </source>
</evidence>
<evidence type="ECO:0007829" key="28">
    <source>
        <dbReference type="PDB" id="7FDS"/>
    </source>
</evidence>
<dbReference type="EMBL" id="X07945">
    <property type="protein sequence ID" value="CAA30766.1"/>
    <property type="molecule type" value="Genomic_DNA"/>
</dbReference>
<dbReference type="EMBL" id="J03838">
    <property type="protein sequence ID" value="AAA25353.1"/>
    <property type="molecule type" value="Genomic_DNA"/>
</dbReference>
<dbReference type="EMBL" id="AL123456">
    <property type="protein sequence ID" value="CCP46590.1"/>
    <property type="molecule type" value="Genomic_DNA"/>
</dbReference>
<dbReference type="PIR" id="D70801">
    <property type="entry name" value="D70801"/>
</dbReference>
<dbReference type="RefSeq" id="NP_218280.1">
    <property type="nucleotide sequence ID" value="NC_000962.3"/>
</dbReference>
<dbReference type="RefSeq" id="WP_003420544.1">
    <property type="nucleotide sequence ID" value="NZ_NVQJ01000009.1"/>
</dbReference>
<dbReference type="PDB" id="4ZJM">
    <property type="method" value="X-ray"/>
    <property type="resolution" value="2.85 A"/>
    <property type="chains" value="A/B/C/D/E/F/G=48-159"/>
</dbReference>
<dbReference type="PDB" id="7FDS">
    <property type="method" value="X-ray"/>
    <property type="resolution" value="1.26 A"/>
    <property type="chains" value="A/B=48-159"/>
</dbReference>
<dbReference type="PDBsum" id="4ZJM"/>
<dbReference type="PDBsum" id="7FDS"/>
<dbReference type="SMR" id="P9WK61"/>
<dbReference type="STRING" id="83332.Rv3763"/>
<dbReference type="PaxDb" id="83332-Rv3763"/>
<dbReference type="GeneID" id="45427763"/>
<dbReference type="GeneID" id="886097"/>
<dbReference type="KEGG" id="mtu:Rv3763"/>
<dbReference type="KEGG" id="mtv:RVBD_3763"/>
<dbReference type="TubercuList" id="Rv3763"/>
<dbReference type="eggNOG" id="ENOG502ZGGY">
    <property type="taxonomic scope" value="Bacteria"/>
</dbReference>
<dbReference type="InParanoid" id="P9WK61"/>
<dbReference type="OrthoDB" id="4376250at2"/>
<dbReference type="EvolutionaryTrace" id="P9WK61"/>
<dbReference type="Proteomes" id="UP000001584">
    <property type="component" value="Chromosome"/>
</dbReference>
<dbReference type="GO" id="GO:0097691">
    <property type="term" value="C:bacterial extracellular vesicle"/>
    <property type="evidence" value="ECO:0000314"/>
    <property type="project" value="UniProtKB"/>
</dbReference>
<dbReference type="GO" id="GO:0009986">
    <property type="term" value="C:cell surface"/>
    <property type="evidence" value="ECO:0007669"/>
    <property type="project" value="UniProtKB-SubCell"/>
</dbReference>
<dbReference type="GO" id="GO:0030430">
    <property type="term" value="C:host cell cytoplasm"/>
    <property type="evidence" value="ECO:0007669"/>
    <property type="project" value="UniProtKB-SubCell"/>
</dbReference>
<dbReference type="GO" id="GO:0009274">
    <property type="term" value="C:peptidoglycan-based cell wall"/>
    <property type="evidence" value="ECO:0007005"/>
    <property type="project" value="MTBBASE"/>
</dbReference>
<dbReference type="GO" id="GO:0005886">
    <property type="term" value="C:plasma membrane"/>
    <property type="evidence" value="ECO:0007005"/>
    <property type="project" value="MTBBASE"/>
</dbReference>
<dbReference type="GO" id="GO:0046789">
    <property type="term" value="F:host cell surface receptor binding"/>
    <property type="evidence" value="ECO:0000353"/>
    <property type="project" value="MTBBASE"/>
</dbReference>
<dbReference type="GO" id="GO:0051701">
    <property type="term" value="P:biological process involved in interaction with host"/>
    <property type="evidence" value="ECO:0000315"/>
    <property type="project" value="MTBBASE"/>
</dbReference>
<dbReference type="GO" id="GO:0042742">
    <property type="term" value="P:defense response to bacterium"/>
    <property type="evidence" value="ECO:0000314"/>
    <property type="project" value="MTBBASE"/>
</dbReference>
<dbReference type="GO" id="GO:0052553">
    <property type="term" value="P:symbiont-mediated perturbation of host immune response"/>
    <property type="evidence" value="ECO:0000315"/>
    <property type="project" value="MTBBASE"/>
</dbReference>
<dbReference type="InterPro" id="IPR008691">
    <property type="entry name" value="LpqH"/>
</dbReference>
<dbReference type="Pfam" id="PF05481">
    <property type="entry name" value="Myco_19_kDa"/>
    <property type="match status" value="1"/>
</dbReference>
<dbReference type="PROSITE" id="PS51257">
    <property type="entry name" value="PROKAR_LIPOPROTEIN"/>
    <property type="match status" value="1"/>
</dbReference>
<reference key="1">
    <citation type="journal article" date="1989" name="Nucleic Acids Res.">
        <title>Nucleotide sequence of the 19 kDa antigen gene from Mycobacterium tuberculosis.</title>
        <authorList>
            <person name="Ashbridge K.R."/>
            <person name="Booth R.J."/>
            <person name="Watson J.D."/>
            <person name="Lathigra R.B."/>
        </authorList>
    </citation>
    <scope>NUCLEOTIDE SEQUENCE [GENOMIC DNA]</scope>
    <source>
        <strain>ATCC 35801 / TMC 107 / Erdman</strain>
    </source>
</reference>
<reference key="2">
    <citation type="journal article" date="1988" name="Proc. Natl. Acad. Sci. U.S.A.">
        <title>Stress proteins are immune targets in leprosy and tuberculosis.</title>
        <authorList>
            <person name="Young D."/>
            <person name="Lathigra R."/>
            <person name="Hendrix R."/>
            <person name="Sweetser D."/>
            <person name="Young R.A."/>
        </authorList>
    </citation>
    <scope>NUCLEOTIDE SEQUENCE [GENOMIC DNA]</scope>
</reference>
<reference key="3">
    <citation type="journal article" date="1998" name="Nature">
        <title>Deciphering the biology of Mycobacterium tuberculosis from the complete genome sequence.</title>
        <authorList>
            <person name="Cole S.T."/>
            <person name="Brosch R."/>
            <person name="Parkhill J."/>
            <person name="Garnier T."/>
            <person name="Churcher C.M."/>
            <person name="Harris D.E."/>
            <person name="Gordon S.V."/>
            <person name="Eiglmeier K."/>
            <person name="Gas S."/>
            <person name="Barry C.E. III"/>
            <person name="Tekaia F."/>
            <person name="Badcock K."/>
            <person name="Basham D."/>
            <person name="Brown D."/>
            <person name="Chillingworth T."/>
            <person name="Connor R."/>
            <person name="Davies R.M."/>
            <person name="Devlin K."/>
            <person name="Feltwell T."/>
            <person name="Gentles S."/>
            <person name="Hamlin N."/>
            <person name="Holroyd S."/>
            <person name="Hornsby T."/>
            <person name="Jagels K."/>
            <person name="Krogh A."/>
            <person name="McLean J."/>
            <person name="Moule S."/>
            <person name="Murphy L.D."/>
            <person name="Oliver S."/>
            <person name="Osborne J."/>
            <person name="Quail M.A."/>
            <person name="Rajandream M.A."/>
            <person name="Rogers J."/>
            <person name="Rutter S."/>
            <person name="Seeger K."/>
            <person name="Skelton S."/>
            <person name="Squares S."/>
            <person name="Squares R."/>
            <person name="Sulston J.E."/>
            <person name="Taylor K."/>
            <person name="Whitehead S."/>
            <person name="Barrell B.G."/>
        </authorList>
    </citation>
    <scope>NUCLEOTIDE SEQUENCE [LARGE SCALE GENOMIC DNA]</scope>
    <source>
        <strain>ATCC 25618 / H37Rv</strain>
    </source>
</reference>
<reference key="4">
    <citation type="journal article" date="1991" name="Res. Microbiol.">
        <title>Lipoprotein antigens of Mycobacterium tuberculosis.</title>
        <authorList>
            <person name="Young D.B."/>
            <person name="Garbe T.R."/>
        </authorList>
    </citation>
    <scope>SUBCELLULAR LOCATION</scope>
    <scope>PALMITOYLATION AT CYS-22</scope>
    <source>
        <strain>H37Rv</strain>
    </source>
</reference>
<reference key="5">
    <citation type="journal article" date="1996" name="EMBO J.">
        <title>Bacterial glycoproteins: a link between glycosylation and proteolytic cleavage of a 19 kDa antigen from Mycobacterium tuberculosis.</title>
        <authorList>
            <person name="Herrmann J.L."/>
            <person name="O'Gaora P."/>
            <person name="Gallagher A."/>
            <person name="Thole J.E."/>
            <person name="Young D.B."/>
        </authorList>
    </citation>
    <scope>GLYCOSYLATION</scope>
    <scope>EXPRESSION IN M.SMEGMATIS AND M.VACCAE</scope>
    <scope>MUTAGENESIS OF 34-THR--THR-36; 34-THR--THR-41 AND 40-THR-THR-41</scope>
</reference>
<reference key="6">
    <citation type="journal article" date="1999" name="Science">
        <title>Host defense mechanisms triggered by microbial lipoproteins through Toll-like receptors.</title>
        <authorList>
            <person name="Brightbill H.D."/>
            <person name="Libraty D.H."/>
            <person name="Krutzik S.R."/>
            <person name="Yang R.B."/>
            <person name="Belisle J.T."/>
            <person name="Bleharski J.R."/>
            <person name="Maitland M."/>
            <person name="Norgard M.V."/>
            <person name="Plevy S.E."/>
            <person name="Smale S.T."/>
            <person name="Brennan P.J."/>
            <person name="Bloom B.R."/>
            <person name="Godowski P.J."/>
            <person name="Modlin R.L."/>
        </authorList>
    </citation>
    <scope>FUNCTION</scope>
    <scope>SUBCELLULAR LOCATION</scope>
    <source>
        <strain>H37Rv</strain>
    </source>
</reference>
<reference key="7">
    <citation type="journal article" date="2001" name="J. Immunol.">
        <title>Lipoprotein access to MHC class I presentation during infection of murine macrophages with live mycobacteria.</title>
        <authorList>
            <person name="Neyrolles O."/>
            <person name="Gould K."/>
            <person name="Gares M.P."/>
            <person name="Brett S."/>
            <person name="Janssen R."/>
            <person name="O'Gaora P."/>
            <person name="Herrmann J.L."/>
            <person name="Prevost M.C."/>
            <person name="Perret E."/>
            <person name="Thole J.E."/>
            <person name="Young D."/>
        </authorList>
    </citation>
    <scope>SUBCELLULAR LOCATION DURING INFECTION</scope>
    <scope>MUTAGENESIS OF CYS-22 AND 34-THR--THR-41</scope>
    <source>
        <strain>H37Rv</strain>
    </source>
</reference>
<reference key="8">
    <citation type="journal article" date="2001" name="J. Immunol.">
        <title>Microbial lipopeptides stimulate dendritic cell maturation via Toll-like receptor 2.</title>
        <authorList>
            <person name="Hertz C.J."/>
            <person name="Kiertscher S.M."/>
            <person name="Godowski P.J."/>
            <person name="Bouis D.A."/>
            <person name="Norgard M.V."/>
            <person name="Roth M.D."/>
            <person name="Modlin R.L."/>
        </authorList>
    </citation>
    <scope>FUNCTION IN DENDRITIC CELL MATURATION</scope>
</reference>
<reference key="9">
    <citation type="journal article" date="2001" name="J. Immunol.">
        <title>Toll-like receptor 2-dependent inhibition of macrophage class II MHC expression and antigen processing by 19-kDa lipoprotein of Mycobacterium tuberculosis.</title>
        <authorList>
            <person name="Noss E.H."/>
            <person name="Pai R.K."/>
            <person name="Sellati T.J."/>
            <person name="Radolf J.D."/>
            <person name="Belisle J."/>
            <person name="Golenbock D.T."/>
            <person name="Boom W.H."/>
            <person name="Harding C.V."/>
        </authorList>
    </citation>
    <scope>FUNCTION</scope>
    <source>
        <strain>ATCC 25177 / H37Ra</strain>
    </source>
</reference>
<reference key="10">
    <citation type="journal article" date="2003" name="J. Immunol.">
        <title>The 19-kDa Mycobacterium tuberculosis protein induces macrophage apoptosis through Toll-like receptor-2.</title>
        <authorList>
            <person name="Lopez M."/>
            <person name="Sly L.M."/>
            <person name="Luu Y."/>
            <person name="Young D."/>
            <person name="Cooper H."/>
            <person name="Reiner N.E."/>
        </authorList>
    </citation>
    <scope>FUNCTION IN HOST APOPTOSIS</scope>
</reference>
<reference key="11">
    <citation type="journal article" date="2003" name="Infect. Immun.">
        <title>The Mycobacterium tuberculosis 19-kilodalton lipoprotein inhibits gamma interferon-regulated HLA-DR and Fc gamma R1 on human macrophages through Toll-like receptor 2.</title>
        <authorList>
            <person name="Gehring A.J."/>
            <person name="Rojas R.E."/>
            <person name="Canaday D.H."/>
            <person name="Lakey D.L."/>
            <person name="Harding C.V."/>
            <person name="Boom W.H."/>
        </authorList>
    </citation>
    <scope>FUNCTION IN HOST IFN-G SIGNALING</scope>
    <scope>DOES NOT CAUSE HOST APOPTOSIS</scope>
    <source>
        <strain>ATCC 25177 / H37Ra</strain>
    </source>
</reference>
<reference key="12">
    <citation type="journal article" date="2005" name="Microb. Pathog.">
        <title>The 19-kDa antigen of Mycobacterium tuberculosis is a major adhesin that binds the mannose receptor of THP-1 monocytic cells and promotes phagocytosis of mycobacteria.</title>
        <authorList>
            <person name="Diaz-Silvestre H."/>
            <person name="Espinosa-Cueto P."/>
            <person name="Sanchez-Gonzalez A."/>
            <person name="Esparza-Ceron M.A."/>
            <person name="Pereira-Suarez A.L."/>
            <person name="Bernal-Fernandez G."/>
            <person name="Espitia C."/>
            <person name="Mancilla R."/>
        </authorList>
    </citation>
    <scope>SUBCELLULAR LOCATION</scope>
    <scope>GLYCOSYLATION</scope>
    <scope>EXPRESSION IN M.SMEGMATIS</scope>
    <source>
        <strain>ATCC 27294 / TMC 102 / H37Rv</strain>
    </source>
</reference>
<reference key="13">
    <citation type="journal article" date="2005" name="Infect. Immun.">
        <title>Effect of deletion or overexpression of the 19-kilodalton lipoprotein Rv3763 on the innate response to Mycobacterium tuberculosis.</title>
        <authorList>
            <person name="Stewart G.R."/>
            <person name="Wilkinson K.A."/>
            <person name="Newton S.M."/>
            <person name="Sullivan S.M."/>
            <person name="Neyrolles O."/>
            <person name="Wain J.R."/>
            <person name="Patel J."/>
            <person name="Pool K.L."/>
            <person name="Young D.B."/>
            <person name="Wilkinson R.J."/>
        </authorList>
    </citation>
    <scope>FUNCTION</scope>
    <scope>INDUCTION</scope>
    <scope>DISRUPTION PHENOTYPE</scope>
    <source>
        <strain>H37Rv</strain>
    </source>
</reference>
<reference key="14">
    <citation type="journal article" date="2006" name="Infect. Immun.">
        <title>The mycobacterial 38-kilodalton glycolipoprotein antigen activates the mitogen-activated protein kinase pathway and release of proinflammatory cytokines through Toll-like receptors 2 and 4 in human monocytes.</title>
        <authorList>
            <person name="Jung S.B."/>
            <person name="Yang C.S."/>
            <person name="Lee J.S."/>
            <person name="Shin A.R."/>
            <person name="Jung S.S."/>
            <person name="Son J.W."/>
            <person name="Harding C.V."/>
            <person name="Kim H.J."/>
            <person name="Park J.K."/>
            <person name="Paik T.H."/>
            <person name="Song C.H."/>
            <person name="Jo E.K."/>
        </authorList>
    </citation>
    <scope>FUNCTION</scope>
    <source>
        <strain>ATCC 25177 / H37Ra</strain>
    </source>
</reference>
<reference key="15">
    <citation type="journal article" date="2007" name="Vaccine">
        <title>A mutant of Mycobacterium tuberculosis lacking the 19-kDa lipoprotein Rv3763 is highly attenuated in vivo but retains potent vaccinogenic properties.</title>
        <authorList>
            <person name="Henao-Tamayo M."/>
            <person name="Junqueira-Kipnis A.P."/>
            <person name="Ordway D."/>
            <person name="Gonzales-Juarrero M."/>
            <person name="Stewart G.R."/>
            <person name="Young D.B."/>
            <person name="Wilkinson R.J."/>
            <person name="Basaraba R.J."/>
            <person name="Orme I.M."/>
        </authorList>
    </citation>
    <scope>DISRUPTION PHENOTYPE</scope>
    <scope>BIOTECHNOLOGY</scope>
    <source>
        <strain>H37Rv</strain>
    </source>
</reference>
<reference key="16">
    <citation type="journal article" date="2011" name="Infect. Immun.">
        <title>Mycobacterium tuberculosis lipoproteins directly regulate human memory CD4(+) T cell activation via Toll-like receptors 1 and 2.</title>
        <authorList>
            <person name="Lancioni C.L."/>
            <person name="Li Q."/>
            <person name="Thomas J.J."/>
            <person name="Ding X."/>
            <person name="Thiel B."/>
            <person name="Drage M.G."/>
            <person name="Pecora N.D."/>
            <person name="Ziady A.G."/>
            <person name="Shank S."/>
            <person name="Harding C.V."/>
            <person name="Boom W.H."/>
            <person name="Rojas R.E."/>
        </authorList>
    </citation>
    <scope>FUNCTION</scope>
    <source>
        <strain>H37Rv</strain>
    </source>
</reference>
<reference key="17">
    <citation type="journal article" date="2011" name="J. Clin. Invest.">
        <title>Mycobacteria release active membrane vesicles that modulate immune responses in a TLR2-dependent manner in mice.</title>
        <authorList>
            <person name="Prados-Rosales R."/>
            <person name="Baena A."/>
            <person name="Martinez L.R."/>
            <person name="Luque-Garcia J."/>
            <person name="Kalscheuer R."/>
            <person name="Veeraraghavan U."/>
            <person name="Camara C."/>
            <person name="Nosanchuk J.D."/>
            <person name="Besra G.S."/>
            <person name="Chen B."/>
            <person name="Jimenez J."/>
            <person name="Glatman-Freedman A."/>
            <person name="Jacobs W.R. Jr."/>
            <person name="Porcelli S.A."/>
            <person name="Casadevall A."/>
        </authorList>
    </citation>
    <scope>SUBCELLULAR LOCATION</scope>
    <source>
        <strain>H37Rv</strain>
    </source>
</reference>
<reference key="18">
    <citation type="journal article" date="2011" name="Mol. Cell. Proteomics">
        <title>Proteogenomic analysis of Mycobacterium tuberculosis by high resolution mass spectrometry.</title>
        <authorList>
            <person name="Kelkar D.S."/>
            <person name="Kumar D."/>
            <person name="Kumar P."/>
            <person name="Balakrishnan L."/>
            <person name="Muthusamy B."/>
            <person name="Yadav A.K."/>
            <person name="Shrivastava P."/>
            <person name="Marimuthu A."/>
            <person name="Anand S."/>
            <person name="Sundaram H."/>
            <person name="Kingsbury R."/>
            <person name="Harsha H.C."/>
            <person name="Nair B."/>
            <person name="Prasad T.S."/>
            <person name="Chauhan D.S."/>
            <person name="Katoch K."/>
            <person name="Katoch V.M."/>
            <person name="Kumar P."/>
            <person name="Chaerkady R."/>
            <person name="Ramachandran S."/>
            <person name="Dash D."/>
            <person name="Pandey A."/>
        </authorList>
    </citation>
    <scope>IDENTIFICATION BY MASS SPECTROMETRY [LARGE SCALE ANALYSIS]</scope>
    <source>
        <strain>ATCC 25618 / H37Rv</strain>
    </source>
</reference>
<reference key="19">
    <citation type="journal article" date="2012" name="Clin. Dev. Immunol.">
        <title>The 19 kDa Mycobacterium tuberculosis lipoprotein (LpqH) induces macrophage apoptosis through extrinsic and intrinsic pathways: a role for the mitochondrial apoptosis-inducing factor.</title>
        <authorList>
            <person name="Sanchez A."/>
            <person name="Espinosa P."/>
            <person name="Garcia T."/>
            <person name="Mancilla R."/>
        </authorList>
    </citation>
    <scope>FUNCTION IN HOST APOPTOSIS</scope>
</reference>
<reference key="20">
    <citation type="journal article" date="2013" name="BMC Microbiol.">
        <title>Lipoproteins of slow-growing Mycobacteria carry three fatty acids and are N-acylated by apolipoprotein N-acyltransferase BCG_2070c.</title>
        <authorList>
            <person name="Bruelle J.K."/>
            <person name="Tschumi A."/>
            <person name="Sander P."/>
        </authorList>
    </citation>
    <scope>MASS SPECTROMETRY</scope>
    <scope>DIACYLGLYCEROL AT CYS-22</scope>
    <scope>PALMITOYLATION AT CYS-22</scope>
    <scope>LIPIDATION</scope>
    <scope>POST-TRANSLATIONAL MODIFICATION</scope>
    <scope>EXPRESSION IN M.BOVIS</scope>
    <source>
        <strain>H37Rv</strain>
    </source>
</reference>
<reference key="21">
    <citation type="journal article" date="2014" name="Chem. Biol. Drug Des.">
        <title>Specific interaction between Mycobacterium tuberculosis lipoprotein-derived peptides and target cells inhibits mycobacterial entry in vitro.</title>
        <authorList>
            <person name="Ocampo M."/>
            <person name="Curtidor H."/>
            <person name="Vanegas M."/>
            <person name="Patarroyo M.A."/>
            <person name="Patarroyo M.E."/>
        </authorList>
    </citation>
    <scope>SUBCELLULAR LOCATION</scope>
    <scope>DOMAIN</scope>
</reference>
<reference key="22">
    <citation type="journal article" date="2015" name="Scand. J. Immunol.">
        <title>PstS-1, the 38-kDa Mycobacterium tuberculosis glycoprotein, is an adhesin, which binds the macrophage mannose receptor and promotes phagocytosis.</title>
        <authorList>
            <person name="Esparza M."/>
            <person name="Palomares B."/>
            <person name="Garcia T."/>
            <person name="Espinosa P."/>
            <person name="Zenteno E."/>
            <person name="Mancilla R."/>
        </authorList>
    </citation>
    <scope>FUNCTION</scope>
    <scope>SUBCELLULAR LOCATION</scope>
    <scope>GLYCOSYLATION</scope>
    <source>
        <strain>H37Rv</strain>
    </source>
</reference>
<reference key="23">
    <citation type="journal article" date="2015" name="Mol. Med. Report.">
        <title>Mycobacterium tuberculosis 19-kDa lipoprotein induces Toll-like receptor 2-dependent peroxisome proliferator-activated receptor gamma expression and promotes inflammatory responses in human macrophages.</title>
        <authorList>
            <person name="Liu L."/>
            <person name="Liu J."/>
            <person name="Niu G."/>
            <person name="Xu Q."/>
            <person name="Chen Q."/>
        </authorList>
    </citation>
    <scope>FUNCTION</scope>
    <source>
        <strain>ATCC 25618 / H37Rv</strain>
    </source>
</reference>
<reference key="24">
    <citation type="journal article" date="2010" name="Nat. Rev. Microbiol.">
        <title>Regulation of antigen presentation by Mycobacterium tuberculosis: a role for Toll-like receptors.</title>
        <authorList>
            <person name="Harding C.V."/>
            <person name="Boom W.H."/>
        </authorList>
    </citation>
    <scope>REVIEW</scope>
</reference>
<reference key="25">
    <citation type="submission" date="2015-04" db="PDB data bank">
        <title>Crystal structure of Mycobacterium tuberculosis LpqH (Rv3763).</title>
        <authorList>
            <person name="Arbing M.A."/>
            <person name="Chan S."/>
            <person name="Kuo E."/>
            <person name="Harris L.R."/>
            <person name="Zhou T.T."/>
            <person name="Eisenberg D."/>
        </authorList>
    </citation>
    <scope>X-RAY CRYSTALLOGRAPHY (2.85 ANGSTROMS) OF 48-159</scope>
    <scope>PUTATIVE FUNCTION</scope>
    <scope>DOMAIN</scope>
    <scope>DISULFIDE BOND</scope>
    <source>
        <strain>H37Rv</strain>
    </source>
</reference>
<accession>P9WK61</accession>
<accession>L0TGP1</accession>
<accession>P0A5J0</accession>
<accession>P11572</accession>
<gene>
    <name type="primary">lpqH</name>
    <name type="ordered locus">Rv3763</name>
    <name type="ORF">MTV025.111</name>
</gene>
<proteinExistence type="evidence at protein level"/>
<feature type="signal peptide" evidence="23">
    <location>
        <begin position="1"/>
        <end position="21"/>
    </location>
</feature>
<feature type="chain" id="PRO_0000018128" description="Lipoprotein LpqH">
    <location>
        <begin position="22"/>
        <end position="159"/>
    </location>
</feature>
<feature type="region of interest" description="Disordered" evidence="2">
    <location>
        <begin position="24"/>
        <end position="51"/>
    </location>
</feature>
<feature type="region of interest" description="Prevents bacterial uptake by a human macrophage-like cell line" evidence="18">
    <location>
        <begin position="41"/>
        <end position="60"/>
    </location>
</feature>
<feature type="compositionally biased region" description="Low complexity" evidence="2">
    <location>
        <begin position="27"/>
        <end position="49"/>
    </location>
</feature>
<feature type="lipid moiety-binding region" description="N-palmitoyl cysteine" evidence="24 25">
    <location>
        <position position="22"/>
    </location>
</feature>
<feature type="lipid moiety-binding region" description="S-diacylglycerol cysteine" evidence="25">
    <location>
        <position position="22"/>
    </location>
</feature>
<feature type="disulfide bond" evidence="27">
    <location>
        <begin position="67"/>
        <end position="158"/>
    </location>
</feature>
<feature type="mutagenesis site" description="Protein not exported from cytoplasm, not released into host cytoplasm (uses recombinant M.vaccae to infect mouse macrophages)." evidence="4">
    <original>MKRGLTVAVAGAAILVAGLSGC</original>
    <variation>M</variation>
    <location>
        <begin position="1"/>
        <end position="22"/>
    </location>
</feature>
<feature type="mutagenesis site" description="Protein not released into host cytoplasm (uses recombinant M.vaccae to infect mouse macrophages)." evidence="4">
    <original>C</original>
    <variation>A</variation>
    <location>
        <position position="22"/>
    </location>
</feature>
<feature type="mutagenesis site" description="No ConA binding; altered protein processing yields 16 kDa soluble form starting on residue 40 in M.smegmatis. Protein poorly released into host cytoplasm (uses recombinant M.vaccae to infect mouse macrophages)." evidence="4 21">
    <original>TTTAAGTT</original>
    <variation>VVVAAGVV</variation>
    <location>
        <begin position="34"/>
        <end position="41"/>
    </location>
</feature>
<feature type="mutagenesis site" description="Decreased ConA binding; altered protein processing yields 21 and 17 kDa forms in M.smegmatis." evidence="21">
    <original>TTT</original>
    <variation>VVV</variation>
    <location>
        <begin position="34"/>
        <end position="36"/>
    </location>
</feature>
<feature type="mutagenesis site" description="Decreased ConA binding; altered protein processing yields 21 and 16 kDa forms in M.smegmatis." evidence="21">
    <original>TT</original>
    <variation>VV</variation>
    <location>
        <begin position="40"/>
        <end position="41"/>
    </location>
</feature>
<feature type="strand" evidence="28">
    <location>
        <begin position="51"/>
        <end position="54"/>
    </location>
</feature>
<feature type="strand" evidence="28">
    <location>
        <begin position="65"/>
        <end position="70"/>
    </location>
</feature>
<feature type="strand" evidence="28">
    <location>
        <begin position="73"/>
        <end position="79"/>
    </location>
</feature>
<feature type="helix" evidence="28">
    <location>
        <begin position="81"/>
        <end position="83"/>
    </location>
</feature>
<feature type="strand" evidence="28">
    <location>
        <begin position="85"/>
        <end position="94"/>
    </location>
</feature>
<feature type="strand" evidence="28">
    <location>
        <begin position="97"/>
        <end position="105"/>
    </location>
</feature>
<feature type="strand" evidence="28">
    <location>
        <begin position="108"/>
        <end position="113"/>
    </location>
</feature>
<feature type="strand" evidence="28">
    <location>
        <begin position="116"/>
        <end position="126"/>
    </location>
</feature>
<feature type="strand" evidence="28">
    <location>
        <begin position="129"/>
        <end position="138"/>
    </location>
</feature>
<feature type="strand" evidence="28">
    <location>
        <begin position="141"/>
        <end position="143"/>
    </location>
</feature>
<feature type="strand" evidence="28">
    <location>
        <begin position="148"/>
        <end position="157"/>
    </location>
</feature>
<protein>
    <recommendedName>
        <fullName>Lipoprotein LpqH</fullName>
    </recommendedName>
    <alternativeName>
        <fullName>19 kDa lipoprotein antigen</fullName>
    </alternativeName>
    <alternativeName>
        <fullName evidence="26">Putative transporter LpqH</fullName>
    </alternativeName>
    <alternativeName>
        <fullName evidence="22">p19</fullName>
    </alternativeName>
</protein>